<protein>
    <recommendedName>
        <fullName evidence="1">Cysteine--tRNA ligase</fullName>
        <ecNumber evidence="1">6.1.1.16</ecNumber>
    </recommendedName>
    <alternativeName>
        <fullName evidence="1">Cysteinyl-tRNA synthetase</fullName>
        <shortName evidence="1">CysRS</shortName>
    </alternativeName>
</protein>
<keyword id="KW-0030">Aminoacyl-tRNA synthetase</keyword>
<keyword id="KW-0067">ATP-binding</keyword>
<keyword id="KW-0963">Cytoplasm</keyword>
<keyword id="KW-0436">Ligase</keyword>
<keyword id="KW-0479">Metal-binding</keyword>
<keyword id="KW-0547">Nucleotide-binding</keyword>
<keyword id="KW-0648">Protein biosynthesis</keyword>
<keyword id="KW-0862">Zinc</keyword>
<name>SYC_PSEE4</name>
<sequence>MLTIYNTLSKTKETFKPLDGNNVRMYVCGMTVYDYCHLGHGRSMVAFDLITRWLRKSGYALTYVRNITDIDDKIINRANENGESFDALTARMIDAMHEDERRLSILKPDLEPRATDHIPGMHAMIQTLIDKGYAYAPGNGDVYYRVGKFAGYGKLSRKKIEDLRIGARIEVGESKQDPLDFVLWKGAKPGEPFWDSPWGPGRPGWHIECSVMSTCCLGESFDIHGGGSDLEFPHHENEIAQSEAATGKPYANAWMHCGMIRINGEKMSKSLNNFFTIRDVLDKYHPEVVRYLLVASHYRSAINYSEDSLRDSKGALERFYHALRGLPRVAAKGGEAFVERFTVAMNDDFGTPEACAVLFDLVREINRLRESDVEAAAGLAGRLRELGDVLGVLQLDADEFLRAGAEGKVDAAQVEALIQARLQARADKNWAESDRIRDQITAMGVVLEDGKGGTTWRLAD</sequence>
<organism>
    <name type="scientific">Pseudomonas entomophila (strain L48)</name>
    <dbReference type="NCBI Taxonomy" id="384676"/>
    <lineage>
        <taxon>Bacteria</taxon>
        <taxon>Pseudomonadati</taxon>
        <taxon>Pseudomonadota</taxon>
        <taxon>Gammaproteobacteria</taxon>
        <taxon>Pseudomonadales</taxon>
        <taxon>Pseudomonadaceae</taxon>
        <taxon>Pseudomonas</taxon>
    </lineage>
</organism>
<reference key="1">
    <citation type="journal article" date="2006" name="Nat. Biotechnol.">
        <title>Complete genome sequence of the entomopathogenic and metabolically versatile soil bacterium Pseudomonas entomophila.</title>
        <authorList>
            <person name="Vodovar N."/>
            <person name="Vallenet D."/>
            <person name="Cruveiller S."/>
            <person name="Rouy Z."/>
            <person name="Barbe V."/>
            <person name="Acosta C."/>
            <person name="Cattolico L."/>
            <person name="Jubin C."/>
            <person name="Lajus A."/>
            <person name="Segurens B."/>
            <person name="Vacherie B."/>
            <person name="Wincker P."/>
            <person name="Weissenbach J."/>
            <person name="Lemaitre B."/>
            <person name="Medigue C."/>
            <person name="Boccard F."/>
        </authorList>
    </citation>
    <scope>NUCLEOTIDE SEQUENCE [LARGE SCALE GENOMIC DNA]</scope>
    <source>
        <strain>L48</strain>
    </source>
</reference>
<dbReference type="EC" id="6.1.1.16" evidence="1"/>
<dbReference type="EMBL" id="CT573326">
    <property type="protein sequence ID" value="CAK14916.1"/>
    <property type="molecule type" value="Genomic_DNA"/>
</dbReference>
<dbReference type="RefSeq" id="WP_011533319.1">
    <property type="nucleotide sequence ID" value="NC_008027.1"/>
</dbReference>
<dbReference type="SMR" id="Q1IBP9"/>
<dbReference type="STRING" id="384676.PSEEN2087"/>
<dbReference type="GeneID" id="32805295"/>
<dbReference type="KEGG" id="pen:PSEEN2087"/>
<dbReference type="eggNOG" id="COG0215">
    <property type="taxonomic scope" value="Bacteria"/>
</dbReference>
<dbReference type="HOGENOM" id="CLU_013528_0_1_6"/>
<dbReference type="OrthoDB" id="9815130at2"/>
<dbReference type="Proteomes" id="UP000000658">
    <property type="component" value="Chromosome"/>
</dbReference>
<dbReference type="GO" id="GO:0005829">
    <property type="term" value="C:cytosol"/>
    <property type="evidence" value="ECO:0007669"/>
    <property type="project" value="TreeGrafter"/>
</dbReference>
<dbReference type="GO" id="GO:0005524">
    <property type="term" value="F:ATP binding"/>
    <property type="evidence" value="ECO:0007669"/>
    <property type="project" value="UniProtKB-UniRule"/>
</dbReference>
<dbReference type="GO" id="GO:0004817">
    <property type="term" value="F:cysteine-tRNA ligase activity"/>
    <property type="evidence" value="ECO:0007669"/>
    <property type="project" value="UniProtKB-UniRule"/>
</dbReference>
<dbReference type="GO" id="GO:0008270">
    <property type="term" value="F:zinc ion binding"/>
    <property type="evidence" value="ECO:0007669"/>
    <property type="project" value="UniProtKB-UniRule"/>
</dbReference>
<dbReference type="GO" id="GO:0006423">
    <property type="term" value="P:cysteinyl-tRNA aminoacylation"/>
    <property type="evidence" value="ECO:0007669"/>
    <property type="project" value="UniProtKB-UniRule"/>
</dbReference>
<dbReference type="CDD" id="cd07963">
    <property type="entry name" value="Anticodon_Ia_Cys"/>
    <property type="match status" value="1"/>
</dbReference>
<dbReference type="CDD" id="cd00672">
    <property type="entry name" value="CysRS_core"/>
    <property type="match status" value="1"/>
</dbReference>
<dbReference type="FunFam" id="3.40.50.620:FF:000009">
    <property type="entry name" value="Cysteine--tRNA ligase"/>
    <property type="match status" value="1"/>
</dbReference>
<dbReference type="Gene3D" id="1.20.120.1910">
    <property type="entry name" value="Cysteine-tRNA ligase, C-terminal anti-codon recognition domain"/>
    <property type="match status" value="1"/>
</dbReference>
<dbReference type="Gene3D" id="3.40.50.620">
    <property type="entry name" value="HUPs"/>
    <property type="match status" value="1"/>
</dbReference>
<dbReference type="HAMAP" id="MF_00041">
    <property type="entry name" value="Cys_tRNA_synth"/>
    <property type="match status" value="1"/>
</dbReference>
<dbReference type="InterPro" id="IPR015803">
    <property type="entry name" value="Cys-tRNA-ligase"/>
</dbReference>
<dbReference type="InterPro" id="IPR015273">
    <property type="entry name" value="Cys-tRNA-synt_Ia_DALR"/>
</dbReference>
<dbReference type="InterPro" id="IPR024909">
    <property type="entry name" value="Cys-tRNA/MSH_ligase"/>
</dbReference>
<dbReference type="InterPro" id="IPR056411">
    <property type="entry name" value="CysS_C"/>
</dbReference>
<dbReference type="InterPro" id="IPR014729">
    <property type="entry name" value="Rossmann-like_a/b/a_fold"/>
</dbReference>
<dbReference type="InterPro" id="IPR032678">
    <property type="entry name" value="tRNA-synt_1_cat_dom"/>
</dbReference>
<dbReference type="InterPro" id="IPR009080">
    <property type="entry name" value="tRNAsynth_Ia_anticodon-bd"/>
</dbReference>
<dbReference type="NCBIfam" id="TIGR00435">
    <property type="entry name" value="cysS"/>
    <property type="match status" value="1"/>
</dbReference>
<dbReference type="PANTHER" id="PTHR10890:SF3">
    <property type="entry name" value="CYSTEINE--TRNA LIGASE, CYTOPLASMIC"/>
    <property type="match status" value="1"/>
</dbReference>
<dbReference type="PANTHER" id="PTHR10890">
    <property type="entry name" value="CYSTEINYL-TRNA SYNTHETASE"/>
    <property type="match status" value="1"/>
</dbReference>
<dbReference type="Pfam" id="PF23493">
    <property type="entry name" value="CysS_C"/>
    <property type="match status" value="1"/>
</dbReference>
<dbReference type="Pfam" id="PF09190">
    <property type="entry name" value="DALR_2"/>
    <property type="match status" value="1"/>
</dbReference>
<dbReference type="Pfam" id="PF01406">
    <property type="entry name" value="tRNA-synt_1e"/>
    <property type="match status" value="1"/>
</dbReference>
<dbReference type="PRINTS" id="PR00983">
    <property type="entry name" value="TRNASYNTHCYS"/>
</dbReference>
<dbReference type="SMART" id="SM00840">
    <property type="entry name" value="DALR_2"/>
    <property type="match status" value="1"/>
</dbReference>
<dbReference type="SUPFAM" id="SSF47323">
    <property type="entry name" value="Anticodon-binding domain of a subclass of class I aminoacyl-tRNA synthetases"/>
    <property type="match status" value="1"/>
</dbReference>
<dbReference type="SUPFAM" id="SSF52374">
    <property type="entry name" value="Nucleotidylyl transferase"/>
    <property type="match status" value="1"/>
</dbReference>
<proteinExistence type="inferred from homology"/>
<gene>
    <name evidence="1" type="primary">cysS</name>
    <name type="ordered locus">PSEEN2087</name>
</gene>
<evidence type="ECO:0000255" key="1">
    <source>
        <dbReference type="HAMAP-Rule" id="MF_00041"/>
    </source>
</evidence>
<feature type="chain" id="PRO_0000332878" description="Cysteine--tRNA ligase">
    <location>
        <begin position="1"/>
        <end position="460"/>
    </location>
</feature>
<feature type="short sequence motif" description="'HIGH' region">
    <location>
        <begin position="30"/>
        <end position="40"/>
    </location>
</feature>
<feature type="short sequence motif" description="'KMSKS' region">
    <location>
        <begin position="266"/>
        <end position="270"/>
    </location>
</feature>
<feature type="binding site" evidence="1">
    <location>
        <position position="28"/>
    </location>
    <ligand>
        <name>Zn(2+)</name>
        <dbReference type="ChEBI" id="CHEBI:29105"/>
    </ligand>
</feature>
<feature type="binding site" evidence="1">
    <location>
        <position position="209"/>
    </location>
    <ligand>
        <name>Zn(2+)</name>
        <dbReference type="ChEBI" id="CHEBI:29105"/>
    </ligand>
</feature>
<feature type="binding site" evidence="1">
    <location>
        <position position="234"/>
    </location>
    <ligand>
        <name>Zn(2+)</name>
        <dbReference type="ChEBI" id="CHEBI:29105"/>
    </ligand>
</feature>
<feature type="binding site" evidence="1">
    <location>
        <position position="238"/>
    </location>
    <ligand>
        <name>Zn(2+)</name>
        <dbReference type="ChEBI" id="CHEBI:29105"/>
    </ligand>
</feature>
<feature type="binding site" evidence="1">
    <location>
        <position position="269"/>
    </location>
    <ligand>
        <name>ATP</name>
        <dbReference type="ChEBI" id="CHEBI:30616"/>
    </ligand>
</feature>
<comment type="catalytic activity">
    <reaction evidence="1">
        <text>tRNA(Cys) + L-cysteine + ATP = L-cysteinyl-tRNA(Cys) + AMP + diphosphate</text>
        <dbReference type="Rhea" id="RHEA:17773"/>
        <dbReference type="Rhea" id="RHEA-COMP:9661"/>
        <dbReference type="Rhea" id="RHEA-COMP:9679"/>
        <dbReference type="ChEBI" id="CHEBI:30616"/>
        <dbReference type="ChEBI" id="CHEBI:33019"/>
        <dbReference type="ChEBI" id="CHEBI:35235"/>
        <dbReference type="ChEBI" id="CHEBI:78442"/>
        <dbReference type="ChEBI" id="CHEBI:78517"/>
        <dbReference type="ChEBI" id="CHEBI:456215"/>
        <dbReference type="EC" id="6.1.1.16"/>
    </reaction>
</comment>
<comment type="cofactor">
    <cofactor evidence="1">
        <name>Zn(2+)</name>
        <dbReference type="ChEBI" id="CHEBI:29105"/>
    </cofactor>
    <text evidence="1">Binds 1 zinc ion per subunit.</text>
</comment>
<comment type="subunit">
    <text evidence="1">Monomer.</text>
</comment>
<comment type="subcellular location">
    <subcellularLocation>
        <location evidence="1">Cytoplasm</location>
    </subcellularLocation>
</comment>
<comment type="similarity">
    <text evidence="1">Belongs to the class-I aminoacyl-tRNA synthetase family.</text>
</comment>
<accession>Q1IBP9</accession>